<organism>
    <name type="scientific">Neisseria meningitidis serogroup B (strain ATCC BAA-335 / MC58)</name>
    <dbReference type="NCBI Taxonomy" id="122586"/>
    <lineage>
        <taxon>Bacteria</taxon>
        <taxon>Pseudomonadati</taxon>
        <taxon>Pseudomonadota</taxon>
        <taxon>Betaproteobacteria</taxon>
        <taxon>Neisseriales</taxon>
        <taxon>Neisseriaceae</taxon>
        <taxon>Neisseria</taxon>
    </lineage>
</organism>
<feature type="chain" id="PRO_0000141385" description="Aspartate-semialdehyde dehydrogenase">
    <location>
        <begin position="1"/>
        <end position="371"/>
    </location>
</feature>
<feature type="active site" description="Acyl-thioester intermediate" evidence="1">
    <location>
        <position position="135"/>
    </location>
</feature>
<feature type="active site" description="Proton acceptor" evidence="1">
    <location>
        <position position="275"/>
    </location>
</feature>
<feature type="binding site" evidence="1">
    <location>
        <begin position="9"/>
        <end position="12"/>
    </location>
    <ligand>
        <name>NADP(+)</name>
        <dbReference type="ChEBI" id="CHEBI:58349"/>
    </ligand>
</feature>
<feature type="binding site" evidence="1">
    <location>
        <begin position="37"/>
        <end position="38"/>
    </location>
    <ligand>
        <name>NADP(+)</name>
        <dbReference type="ChEBI" id="CHEBI:58349"/>
    </ligand>
</feature>
<feature type="binding site" evidence="1">
    <location>
        <position position="73"/>
    </location>
    <ligand>
        <name>NADP(+)</name>
        <dbReference type="ChEBI" id="CHEBI:58349"/>
    </ligand>
</feature>
<feature type="binding site" evidence="1">
    <location>
        <position position="102"/>
    </location>
    <ligand>
        <name>phosphate</name>
        <dbReference type="ChEBI" id="CHEBI:43474"/>
    </ligand>
</feature>
<feature type="binding site" evidence="1">
    <location>
        <position position="162"/>
    </location>
    <ligand>
        <name>substrate</name>
    </ligand>
</feature>
<feature type="binding site" evidence="1">
    <location>
        <begin position="165"/>
        <end position="166"/>
    </location>
    <ligand>
        <name>NADP(+)</name>
        <dbReference type="ChEBI" id="CHEBI:58349"/>
    </ligand>
</feature>
<feature type="binding site" evidence="1">
    <location>
        <position position="193"/>
    </location>
    <ligand>
        <name>NADP(+)</name>
        <dbReference type="ChEBI" id="CHEBI:58349"/>
    </ligand>
</feature>
<feature type="binding site" evidence="1">
    <location>
        <position position="241"/>
    </location>
    <ligand>
        <name>substrate</name>
    </ligand>
</feature>
<feature type="binding site" evidence="1">
    <location>
        <position position="244"/>
    </location>
    <ligand>
        <name>phosphate</name>
        <dbReference type="ChEBI" id="CHEBI:43474"/>
    </ligand>
</feature>
<feature type="binding site" evidence="1">
    <location>
        <position position="268"/>
    </location>
    <ligand>
        <name>substrate</name>
    </ligand>
</feature>
<feature type="binding site" evidence="1">
    <location>
        <position position="351"/>
    </location>
    <ligand>
        <name>NADP(+)</name>
        <dbReference type="ChEBI" id="CHEBI:58349"/>
    </ligand>
</feature>
<feature type="sequence conflict" description="In Ref. 2; CAA78444." evidence="2" ref="2">
    <original>A</original>
    <variation>R</variation>
    <location>
        <position position="44"/>
    </location>
</feature>
<feature type="sequence conflict" description="In Ref. 2; CAA78444." evidence="2" ref="2">
    <original>DVL</original>
    <variation>NVI</variation>
    <location>
        <begin position="117"/>
        <end position="119"/>
    </location>
</feature>
<proteinExistence type="inferred from homology"/>
<comment type="function">
    <text evidence="1">Catalyzes the NADPH-dependent formation of L-aspartate-semialdehyde (L-ASA) by the reductive dephosphorylation of L-aspartyl-4-phosphate.</text>
</comment>
<comment type="catalytic activity">
    <reaction evidence="1">
        <text>L-aspartate 4-semialdehyde + phosphate + NADP(+) = 4-phospho-L-aspartate + NADPH + H(+)</text>
        <dbReference type="Rhea" id="RHEA:24284"/>
        <dbReference type="ChEBI" id="CHEBI:15378"/>
        <dbReference type="ChEBI" id="CHEBI:43474"/>
        <dbReference type="ChEBI" id="CHEBI:57535"/>
        <dbReference type="ChEBI" id="CHEBI:57783"/>
        <dbReference type="ChEBI" id="CHEBI:58349"/>
        <dbReference type="ChEBI" id="CHEBI:537519"/>
        <dbReference type="EC" id="1.2.1.11"/>
    </reaction>
</comment>
<comment type="pathway">
    <text evidence="1">Amino-acid biosynthesis; L-lysine biosynthesis via DAP pathway; (S)-tetrahydrodipicolinate from L-aspartate: step 2/4.</text>
</comment>
<comment type="pathway">
    <text evidence="1">Amino-acid biosynthesis; L-methionine biosynthesis via de novo pathway; L-homoserine from L-aspartate: step 2/3.</text>
</comment>
<comment type="pathway">
    <text evidence="1">Amino-acid biosynthesis; L-threonine biosynthesis; L-threonine from L-aspartate: step 2/5.</text>
</comment>
<comment type="subunit">
    <text>Homodimer.</text>
</comment>
<comment type="similarity">
    <text evidence="1">Belongs to the aspartate-semialdehyde dehydrogenase family.</text>
</comment>
<gene>
    <name evidence="1" type="primary">asd</name>
    <name type="ordered locus">NMB2079</name>
</gene>
<protein>
    <recommendedName>
        <fullName evidence="1">Aspartate-semialdehyde dehydrogenase</fullName>
        <shortName evidence="1">ASA dehydrogenase</shortName>
        <shortName evidence="1">ASADH</shortName>
        <ecNumber evidence="1">1.2.1.11</ecNumber>
    </recommendedName>
    <alternativeName>
        <fullName evidence="1">Aspartate-beta-semialdehyde dehydrogenase</fullName>
    </alternativeName>
</protein>
<name>DHAS_NEIMB</name>
<sequence>MKVGFVGWRGMVGSVLMQRMKEENDFAHIPEAFFFTTSNVGGAAPDFGQAAKTLLDANNVAELAKMDIIVTCQGGDYTKSVFQALRDSGWNGYWIDAASSLRMKDDAIIVLDPVNRDVLDNGLKNGVKNYIGGNCTVSLMLMALGGLFQNDLVEWATSMTYQAASGAGAKNMRELISGMGAVHAQVADALADPAGSILDIDRKVSDFLRSEDYPKANFGVPLAGSLIPWIDVDLGNGQSKEEWKGGVETNKILGRSDNPTVIDGLCVRVGAMRCHSQAITLKLKKDLPVSEIETILAGANDWVKVIPNEKEASIHELTPAKVTGTLSVPVGRIRKLGMGGEYISAFTVGDQLLWGAAEPLRRVLRIVLGSL</sequence>
<evidence type="ECO:0000255" key="1">
    <source>
        <dbReference type="HAMAP-Rule" id="MF_02121"/>
    </source>
</evidence>
<evidence type="ECO:0000305" key="2"/>
<dbReference type="EC" id="1.2.1.11" evidence="1"/>
<dbReference type="EMBL" id="AE002098">
    <property type="protein sequence ID" value="AAF42397.1"/>
    <property type="molecule type" value="Genomic_DNA"/>
</dbReference>
<dbReference type="EMBL" id="Z14063">
    <property type="protein sequence ID" value="CAA78444.1"/>
    <property type="molecule type" value="Genomic_DNA"/>
</dbReference>
<dbReference type="PIR" id="E81009">
    <property type="entry name" value="E81009"/>
</dbReference>
<dbReference type="RefSeq" id="NP_275068.1">
    <property type="nucleotide sequence ID" value="NC_003112.2"/>
</dbReference>
<dbReference type="RefSeq" id="WP_002225714.1">
    <property type="nucleotide sequence ID" value="NC_003112.2"/>
</dbReference>
<dbReference type="SMR" id="P30903"/>
<dbReference type="FunCoup" id="P30903">
    <property type="interactions" value="126"/>
</dbReference>
<dbReference type="STRING" id="122586.NMB2079"/>
<dbReference type="PaxDb" id="122586-NMB2079"/>
<dbReference type="KEGG" id="nme:NMB2079"/>
<dbReference type="PATRIC" id="fig|122586.8.peg.2660"/>
<dbReference type="HOGENOM" id="CLU_066397_0_0_4"/>
<dbReference type="InParanoid" id="P30903"/>
<dbReference type="OrthoDB" id="9022717at2"/>
<dbReference type="UniPathway" id="UPA00034">
    <property type="reaction ID" value="UER00016"/>
</dbReference>
<dbReference type="UniPathway" id="UPA00050">
    <property type="reaction ID" value="UER00463"/>
</dbReference>
<dbReference type="UniPathway" id="UPA00051">
    <property type="reaction ID" value="UER00464"/>
</dbReference>
<dbReference type="Proteomes" id="UP000000425">
    <property type="component" value="Chromosome"/>
</dbReference>
<dbReference type="GO" id="GO:0004073">
    <property type="term" value="F:aspartate-semialdehyde dehydrogenase activity"/>
    <property type="evidence" value="ECO:0007669"/>
    <property type="project" value="UniProtKB-UniRule"/>
</dbReference>
<dbReference type="GO" id="GO:0051287">
    <property type="term" value="F:NAD binding"/>
    <property type="evidence" value="ECO:0007669"/>
    <property type="project" value="InterPro"/>
</dbReference>
<dbReference type="GO" id="GO:0050661">
    <property type="term" value="F:NADP binding"/>
    <property type="evidence" value="ECO:0007669"/>
    <property type="project" value="UniProtKB-UniRule"/>
</dbReference>
<dbReference type="GO" id="GO:0046983">
    <property type="term" value="F:protein dimerization activity"/>
    <property type="evidence" value="ECO:0007669"/>
    <property type="project" value="InterPro"/>
</dbReference>
<dbReference type="GO" id="GO:0071266">
    <property type="term" value="P:'de novo' L-methionine biosynthetic process"/>
    <property type="evidence" value="ECO:0007669"/>
    <property type="project" value="UniProtKB-UniRule"/>
</dbReference>
<dbReference type="GO" id="GO:0019877">
    <property type="term" value="P:diaminopimelate biosynthetic process"/>
    <property type="evidence" value="ECO:0007669"/>
    <property type="project" value="UniProtKB-UniRule"/>
</dbReference>
<dbReference type="GO" id="GO:0009097">
    <property type="term" value="P:isoleucine biosynthetic process"/>
    <property type="evidence" value="ECO:0007669"/>
    <property type="project" value="InterPro"/>
</dbReference>
<dbReference type="GO" id="GO:0009089">
    <property type="term" value="P:lysine biosynthetic process via diaminopimelate"/>
    <property type="evidence" value="ECO:0007669"/>
    <property type="project" value="UniProtKB-UniRule"/>
</dbReference>
<dbReference type="GO" id="GO:0009088">
    <property type="term" value="P:threonine biosynthetic process"/>
    <property type="evidence" value="ECO:0007669"/>
    <property type="project" value="UniProtKB-UniRule"/>
</dbReference>
<dbReference type="CDD" id="cd23938">
    <property type="entry name" value="ASADH_C_bac_like"/>
    <property type="match status" value="1"/>
</dbReference>
<dbReference type="CDD" id="cd02314">
    <property type="entry name" value="VcASADH1_like_N"/>
    <property type="match status" value="1"/>
</dbReference>
<dbReference type="Gene3D" id="3.30.360.10">
    <property type="entry name" value="Dihydrodipicolinate Reductase, domain 2"/>
    <property type="match status" value="1"/>
</dbReference>
<dbReference type="Gene3D" id="3.40.50.720">
    <property type="entry name" value="NAD(P)-binding Rossmann-like Domain"/>
    <property type="match status" value="1"/>
</dbReference>
<dbReference type="HAMAP" id="MF_02121">
    <property type="entry name" value="ASADH"/>
    <property type="match status" value="1"/>
</dbReference>
<dbReference type="InterPro" id="IPR000319">
    <property type="entry name" value="Asp-semialdehyde_DH_CS"/>
</dbReference>
<dbReference type="InterPro" id="IPR011534">
    <property type="entry name" value="Asp_ADH_gamma-type"/>
</dbReference>
<dbReference type="InterPro" id="IPR012080">
    <property type="entry name" value="Asp_semialdehyde_DH"/>
</dbReference>
<dbReference type="InterPro" id="IPR036291">
    <property type="entry name" value="NAD(P)-bd_dom_sf"/>
</dbReference>
<dbReference type="InterPro" id="IPR000534">
    <property type="entry name" value="Semialdehyde_DH_NAD-bd"/>
</dbReference>
<dbReference type="InterPro" id="IPR012280">
    <property type="entry name" value="Semialdhyde_DH_dimer_dom"/>
</dbReference>
<dbReference type="NCBIfam" id="TIGR01745">
    <property type="entry name" value="asd_gamma"/>
    <property type="match status" value="1"/>
</dbReference>
<dbReference type="NCBIfam" id="NF005144">
    <property type="entry name" value="PRK06598.1"/>
    <property type="match status" value="1"/>
</dbReference>
<dbReference type="PANTHER" id="PTHR46278:SF4">
    <property type="entry name" value="ASPARTATE-SEMIALDEHYDE DEHYDROGENASE"/>
    <property type="match status" value="1"/>
</dbReference>
<dbReference type="PANTHER" id="PTHR46278">
    <property type="entry name" value="DEHYDROGENASE, PUTATIVE-RELATED"/>
    <property type="match status" value="1"/>
</dbReference>
<dbReference type="Pfam" id="PF01118">
    <property type="entry name" value="Semialdhyde_dh"/>
    <property type="match status" value="1"/>
</dbReference>
<dbReference type="Pfam" id="PF02774">
    <property type="entry name" value="Semialdhyde_dhC"/>
    <property type="match status" value="1"/>
</dbReference>
<dbReference type="PIRSF" id="PIRSF000148">
    <property type="entry name" value="ASA_dh"/>
    <property type="match status" value="1"/>
</dbReference>
<dbReference type="SMART" id="SM00859">
    <property type="entry name" value="Semialdhyde_dh"/>
    <property type="match status" value="1"/>
</dbReference>
<dbReference type="SUPFAM" id="SSF55347">
    <property type="entry name" value="Glyceraldehyde-3-phosphate dehydrogenase-like, C-terminal domain"/>
    <property type="match status" value="1"/>
</dbReference>
<dbReference type="SUPFAM" id="SSF51735">
    <property type="entry name" value="NAD(P)-binding Rossmann-fold domains"/>
    <property type="match status" value="1"/>
</dbReference>
<dbReference type="PROSITE" id="PS01103">
    <property type="entry name" value="ASD"/>
    <property type="match status" value="1"/>
</dbReference>
<keyword id="KW-0028">Amino-acid biosynthesis</keyword>
<keyword id="KW-0220">Diaminopimelate biosynthesis</keyword>
<keyword id="KW-0457">Lysine biosynthesis</keyword>
<keyword id="KW-0486">Methionine biosynthesis</keyword>
<keyword id="KW-0521">NADP</keyword>
<keyword id="KW-0560">Oxidoreductase</keyword>
<keyword id="KW-1185">Reference proteome</keyword>
<keyword id="KW-0791">Threonine biosynthesis</keyword>
<reference key="1">
    <citation type="journal article" date="2000" name="Science">
        <title>Complete genome sequence of Neisseria meningitidis serogroup B strain MC58.</title>
        <authorList>
            <person name="Tettelin H."/>
            <person name="Saunders N.J."/>
            <person name="Heidelberg J.F."/>
            <person name="Jeffries A.C."/>
            <person name="Nelson K.E."/>
            <person name="Eisen J.A."/>
            <person name="Ketchum K.A."/>
            <person name="Hood D.W."/>
            <person name="Peden J.F."/>
            <person name="Dodson R.J."/>
            <person name="Nelson W.C."/>
            <person name="Gwinn M.L."/>
            <person name="DeBoy R.T."/>
            <person name="Peterson J.D."/>
            <person name="Hickey E.K."/>
            <person name="Haft D.H."/>
            <person name="Salzberg S.L."/>
            <person name="White O."/>
            <person name="Fleischmann R.D."/>
            <person name="Dougherty B.A."/>
            <person name="Mason T.M."/>
            <person name="Ciecko A."/>
            <person name="Parksey D.S."/>
            <person name="Blair E."/>
            <person name="Cittone H."/>
            <person name="Clark E.B."/>
            <person name="Cotton M.D."/>
            <person name="Utterback T.R."/>
            <person name="Khouri H.M."/>
            <person name="Qin H."/>
            <person name="Vamathevan J.J."/>
            <person name="Gill J."/>
            <person name="Scarlato V."/>
            <person name="Masignani V."/>
            <person name="Pizza M."/>
            <person name="Grandi G."/>
            <person name="Sun L."/>
            <person name="Smith H.O."/>
            <person name="Fraser C.M."/>
            <person name="Moxon E.R."/>
            <person name="Rappuoli R."/>
            <person name="Venter J.C."/>
        </authorList>
    </citation>
    <scope>NUCLEOTIDE SEQUENCE [LARGE SCALE GENOMIC DNA]</scope>
    <source>
        <strain>ATCC BAA-335 / MC58</strain>
    </source>
</reference>
<reference key="2">
    <citation type="journal article" date="1993" name="Gene">
        <title>Cloning and characterization of the Neisseria meningitidis asd gene.</title>
        <authorList>
            <person name="Hatten L."/>
            <person name="Wang L."/>
            <person name="Schryvers A.B."/>
            <person name="Schweizer H.P."/>
        </authorList>
    </citation>
    <scope>NUCLEOTIDE SEQUENCE [GENOMIC DNA] OF 1-140</scope>
    <source>
        <strain>CCUG 37603 / B16B6 / Serogroup B / Serotype 2a</strain>
    </source>
</reference>
<accession>P30903</accession>